<name>COAE_BACFN</name>
<keyword id="KW-0067">ATP-binding</keyword>
<keyword id="KW-0173">Coenzyme A biosynthesis</keyword>
<keyword id="KW-0963">Cytoplasm</keyword>
<keyword id="KW-0418">Kinase</keyword>
<keyword id="KW-0547">Nucleotide-binding</keyword>
<keyword id="KW-0808">Transferase</keyword>
<proteinExistence type="inferred from homology"/>
<gene>
    <name evidence="1" type="primary">coaE</name>
    <name type="ordered locus">BF1169</name>
</gene>
<evidence type="ECO:0000255" key="1">
    <source>
        <dbReference type="HAMAP-Rule" id="MF_00376"/>
    </source>
</evidence>
<comment type="function">
    <text evidence="1">Catalyzes the phosphorylation of the 3'-hydroxyl group of dephosphocoenzyme A to form coenzyme A.</text>
</comment>
<comment type="catalytic activity">
    <reaction evidence="1">
        <text>3'-dephospho-CoA + ATP = ADP + CoA + H(+)</text>
        <dbReference type="Rhea" id="RHEA:18245"/>
        <dbReference type="ChEBI" id="CHEBI:15378"/>
        <dbReference type="ChEBI" id="CHEBI:30616"/>
        <dbReference type="ChEBI" id="CHEBI:57287"/>
        <dbReference type="ChEBI" id="CHEBI:57328"/>
        <dbReference type="ChEBI" id="CHEBI:456216"/>
        <dbReference type="EC" id="2.7.1.24"/>
    </reaction>
</comment>
<comment type="pathway">
    <text evidence="1">Cofactor biosynthesis; coenzyme A biosynthesis; CoA from (R)-pantothenate: step 5/5.</text>
</comment>
<comment type="subcellular location">
    <subcellularLocation>
        <location evidence="1">Cytoplasm</location>
    </subcellularLocation>
</comment>
<comment type="similarity">
    <text evidence="1">Belongs to the CoaE family.</text>
</comment>
<sequence length="205" mass="22883">MAIKIGITGGIGSGKSVVSHLLEVMGVPVYISDEESKKVVATDPVIRKELCDLVGEEVFFGGKLNKTLLATYLFASSTHASQVNGIIHPRVKEHFRQWSSHKDCLDIIGMESAILIESGFADEVDCIVMVYAPLELRVERAVRRDNASCEQIMQRIRSQMSDEEKCERASFVIINDGEKPLIPQILELIAFLYQKIHYLCSAKNN</sequence>
<reference key="1">
    <citation type="journal article" date="2005" name="Science">
        <title>Extensive DNA inversions in the B. fragilis genome control variable gene expression.</title>
        <authorList>
            <person name="Cerdeno-Tarraga A.-M."/>
            <person name="Patrick S."/>
            <person name="Crossman L.C."/>
            <person name="Blakely G."/>
            <person name="Abratt V."/>
            <person name="Lennard N."/>
            <person name="Poxton I."/>
            <person name="Duerden B."/>
            <person name="Harris B."/>
            <person name="Quail M.A."/>
            <person name="Barron A."/>
            <person name="Clark L."/>
            <person name="Corton C."/>
            <person name="Doggett J."/>
            <person name="Holden M.T.G."/>
            <person name="Larke N."/>
            <person name="Line A."/>
            <person name="Lord A."/>
            <person name="Norbertczak H."/>
            <person name="Ormond D."/>
            <person name="Price C."/>
            <person name="Rabbinowitsch E."/>
            <person name="Woodward J."/>
            <person name="Barrell B.G."/>
            <person name="Parkhill J."/>
        </authorList>
    </citation>
    <scope>NUCLEOTIDE SEQUENCE [LARGE SCALE GENOMIC DNA]</scope>
    <source>
        <strain>ATCC 25285 / DSM 2151 / CCUG 4856 / JCM 11019 / LMG 10263 / NCTC 9343 / Onslow / VPI 2553 / EN-2</strain>
    </source>
</reference>
<feature type="chain" id="PRO_0000243261" description="Dephospho-CoA kinase">
    <location>
        <begin position="1"/>
        <end position="205"/>
    </location>
</feature>
<feature type="domain" description="DPCK" evidence="1">
    <location>
        <begin position="4"/>
        <end position="203"/>
    </location>
</feature>
<feature type="binding site" evidence="1">
    <location>
        <begin position="12"/>
        <end position="17"/>
    </location>
    <ligand>
        <name>ATP</name>
        <dbReference type="ChEBI" id="CHEBI:30616"/>
    </ligand>
</feature>
<organism>
    <name type="scientific">Bacteroides fragilis (strain ATCC 25285 / DSM 2151 / CCUG 4856 / JCM 11019 / LMG 10263 / NCTC 9343 / Onslow / VPI 2553 / EN-2)</name>
    <dbReference type="NCBI Taxonomy" id="272559"/>
    <lineage>
        <taxon>Bacteria</taxon>
        <taxon>Pseudomonadati</taxon>
        <taxon>Bacteroidota</taxon>
        <taxon>Bacteroidia</taxon>
        <taxon>Bacteroidales</taxon>
        <taxon>Bacteroidaceae</taxon>
        <taxon>Bacteroides</taxon>
    </lineage>
</organism>
<dbReference type="EC" id="2.7.1.24" evidence="1"/>
<dbReference type="EMBL" id="CR626927">
    <property type="protein sequence ID" value="CAH06891.1"/>
    <property type="molecule type" value="Genomic_DNA"/>
</dbReference>
<dbReference type="RefSeq" id="WP_010992356.1">
    <property type="nucleotide sequence ID" value="NC_003228.3"/>
</dbReference>
<dbReference type="SMR" id="Q5LG50"/>
<dbReference type="PaxDb" id="272559-BF9343_1110"/>
<dbReference type="GeneID" id="60369296"/>
<dbReference type="KEGG" id="bfs:BF9343_1110"/>
<dbReference type="eggNOG" id="COG0237">
    <property type="taxonomic scope" value="Bacteria"/>
</dbReference>
<dbReference type="HOGENOM" id="CLU_057180_3_1_10"/>
<dbReference type="UniPathway" id="UPA00241">
    <property type="reaction ID" value="UER00356"/>
</dbReference>
<dbReference type="Proteomes" id="UP000006731">
    <property type="component" value="Chromosome"/>
</dbReference>
<dbReference type="GO" id="GO:0005737">
    <property type="term" value="C:cytoplasm"/>
    <property type="evidence" value="ECO:0007669"/>
    <property type="project" value="UniProtKB-SubCell"/>
</dbReference>
<dbReference type="GO" id="GO:0005524">
    <property type="term" value="F:ATP binding"/>
    <property type="evidence" value="ECO:0007669"/>
    <property type="project" value="UniProtKB-UniRule"/>
</dbReference>
<dbReference type="GO" id="GO:0004140">
    <property type="term" value="F:dephospho-CoA kinase activity"/>
    <property type="evidence" value="ECO:0007669"/>
    <property type="project" value="UniProtKB-UniRule"/>
</dbReference>
<dbReference type="GO" id="GO:0015937">
    <property type="term" value="P:coenzyme A biosynthetic process"/>
    <property type="evidence" value="ECO:0007669"/>
    <property type="project" value="UniProtKB-UniRule"/>
</dbReference>
<dbReference type="CDD" id="cd02022">
    <property type="entry name" value="DPCK"/>
    <property type="match status" value="1"/>
</dbReference>
<dbReference type="Gene3D" id="3.40.50.300">
    <property type="entry name" value="P-loop containing nucleotide triphosphate hydrolases"/>
    <property type="match status" value="1"/>
</dbReference>
<dbReference type="HAMAP" id="MF_00376">
    <property type="entry name" value="Dephospho_CoA_kinase"/>
    <property type="match status" value="1"/>
</dbReference>
<dbReference type="InterPro" id="IPR001977">
    <property type="entry name" value="Depp_CoAkinase"/>
</dbReference>
<dbReference type="InterPro" id="IPR027417">
    <property type="entry name" value="P-loop_NTPase"/>
</dbReference>
<dbReference type="NCBIfam" id="TIGR00152">
    <property type="entry name" value="dephospho-CoA kinase"/>
    <property type="match status" value="1"/>
</dbReference>
<dbReference type="PANTHER" id="PTHR10695:SF46">
    <property type="entry name" value="BIFUNCTIONAL COENZYME A SYNTHASE-RELATED"/>
    <property type="match status" value="1"/>
</dbReference>
<dbReference type="PANTHER" id="PTHR10695">
    <property type="entry name" value="DEPHOSPHO-COA KINASE-RELATED"/>
    <property type="match status" value="1"/>
</dbReference>
<dbReference type="Pfam" id="PF01121">
    <property type="entry name" value="CoaE"/>
    <property type="match status" value="1"/>
</dbReference>
<dbReference type="SUPFAM" id="SSF52540">
    <property type="entry name" value="P-loop containing nucleoside triphosphate hydrolases"/>
    <property type="match status" value="1"/>
</dbReference>
<dbReference type="PROSITE" id="PS51219">
    <property type="entry name" value="DPCK"/>
    <property type="match status" value="1"/>
</dbReference>
<accession>Q5LG50</accession>
<protein>
    <recommendedName>
        <fullName evidence="1">Dephospho-CoA kinase</fullName>
        <ecNumber evidence="1">2.7.1.24</ecNumber>
    </recommendedName>
    <alternativeName>
        <fullName evidence="1">Dephosphocoenzyme A kinase</fullName>
    </alternativeName>
</protein>